<reference key="1">
    <citation type="journal article" date="2001" name="Proc. Natl. Acad. Sci. U.S.A.">
        <title>Genome sequence of an industrial microorganism Streptomyces avermitilis: deducing the ability of producing secondary metabolites.</title>
        <authorList>
            <person name="Omura S."/>
            <person name="Ikeda H."/>
            <person name="Ishikawa J."/>
            <person name="Hanamoto A."/>
            <person name="Takahashi C."/>
            <person name="Shinose M."/>
            <person name="Takahashi Y."/>
            <person name="Horikawa H."/>
            <person name="Nakazawa H."/>
            <person name="Osonoe T."/>
            <person name="Kikuchi H."/>
            <person name="Shiba T."/>
            <person name="Sakaki Y."/>
            <person name="Hattori M."/>
        </authorList>
    </citation>
    <scope>NUCLEOTIDE SEQUENCE [LARGE SCALE GENOMIC DNA]</scope>
    <source>
        <strain>ATCC 31267 / DSM 46492 / JCM 5070 / NBRC 14893 / NCIMB 12804 / NRRL 8165 / MA-4680</strain>
    </source>
</reference>
<reference key="2">
    <citation type="journal article" date="2003" name="Nat. Biotechnol.">
        <title>Complete genome sequence and comparative analysis of the industrial microorganism Streptomyces avermitilis.</title>
        <authorList>
            <person name="Ikeda H."/>
            <person name="Ishikawa J."/>
            <person name="Hanamoto A."/>
            <person name="Shinose M."/>
            <person name="Kikuchi H."/>
            <person name="Shiba T."/>
            <person name="Sakaki Y."/>
            <person name="Hattori M."/>
            <person name="Omura S."/>
        </authorList>
    </citation>
    <scope>NUCLEOTIDE SEQUENCE [LARGE SCALE GENOMIC DNA]</scope>
    <source>
        <strain>ATCC 31267 / DSM 46492 / JCM 5070 / NBRC 14893 / NCIMB 12804 / NRRL 8165 / MA-4680</strain>
    </source>
</reference>
<proteinExistence type="inferred from homology"/>
<accession>Q82BB8</accession>
<keyword id="KW-0012">Acyltransferase</keyword>
<keyword id="KW-0963">Cytoplasm</keyword>
<keyword id="KW-0275">Fatty acid biosynthesis</keyword>
<keyword id="KW-0276">Fatty acid metabolism</keyword>
<keyword id="KW-0444">Lipid biosynthesis</keyword>
<keyword id="KW-0443">Lipid metabolism</keyword>
<keyword id="KW-0511">Multifunctional enzyme</keyword>
<keyword id="KW-1185">Reference proteome</keyword>
<keyword id="KW-0808">Transferase</keyword>
<evidence type="ECO:0000255" key="1">
    <source>
        <dbReference type="HAMAP-Rule" id="MF_01815"/>
    </source>
</evidence>
<comment type="function">
    <text evidence="1">Catalyzes the condensation reaction of fatty acid synthesis by the addition to an acyl acceptor of two carbons from malonyl-ACP. Catalyzes the first condensation reaction which initiates fatty acid synthesis and may therefore play a role in governing the total rate of fatty acid production. Possesses both acetoacetyl-ACP synthase and acetyl transacylase activities. Its substrate specificity determines the biosynthesis of branched-chain and/or straight-chain of fatty acids.</text>
</comment>
<comment type="catalytic activity">
    <reaction evidence="1">
        <text>malonyl-[ACP] + acetyl-CoA + H(+) = 3-oxobutanoyl-[ACP] + CO2 + CoA</text>
        <dbReference type="Rhea" id="RHEA:12080"/>
        <dbReference type="Rhea" id="RHEA-COMP:9623"/>
        <dbReference type="Rhea" id="RHEA-COMP:9625"/>
        <dbReference type="ChEBI" id="CHEBI:15378"/>
        <dbReference type="ChEBI" id="CHEBI:16526"/>
        <dbReference type="ChEBI" id="CHEBI:57287"/>
        <dbReference type="ChEBI" id="CHEBI:57288"/>
        <dbReference type="ChEBI" id="CHEBI:78449"/>
        <dbReference type="ChEBI" id="CHEBI:78450"/>
        <dbReference type="EC" id="2.3.1.180"/>
    </reaction>
</comment>
<comment type="pathway">
    <text evidence="1">Lipid metabolism; fatty acid biosynthesis.</text>
</comment>
<comment type="subunit">
    <text evidence="1">Homodimer.</text>
</comment>
<comment type="subcellular location">
    <subcellularLocation>
        <location evidence="1">Cytoplasm</location>
    </subcellularLocation>
</comment>
<comment type="domain">
    <text evidence="1">The last Arg residue of the ACP-binding site is essential for the weak association between ACP/AcpP and FabH.</text>
</comment>
<comment type="similarity">
    <text evidence="1">Belongs to the thiolase-like superfamily. FabH family.</text>
</comment>
<name>FABH1_STRAW</name>
<sequence length="355" mass="37173">MSKIKARKGAPYARILGVGGYRPVRVVPNDVILEKIDSSDEWIRSRSGIETRHWASDEETVAAMSIEASGKAIADAGITASQIGAVVVSTVSHFSQTPAIATEIADKLGTNKAAAFDISAGCAGFGYGLTLAKGMVVEGSAEYVLVIGVERLSDLTDLEDRATAFLFGDGAGAVVVGPSEEPHIGPTVWGSEGDKAGTIKQTVPWDRYLPHSRLRSSGGTPTGDVSPLPLDSEGNVKFPAITQEGQAVFRWAVFEMAKVAQQALDAAGITSDDLDVFIPHQANERIIDSMVKTLKLPEHVTVARDVRTTGNTSAASIPLAMERLLATGEAKSGDTALVIGFGAGLVYAATVVTLP</sequence>
<feature type="chain" id="PRO_0000110481" description="Beta-ketoacyl-[acyl-carrier-protein] synthase III 1">
    <location>
        <begin position="1"/>
        <end position="355"/>
    </location>
</feature>
<feature type="region of interest" description="ACP-binding" evidence="1">
    <location>
        <begin position="281"/>
        <end position="285"/>
    </location>
</feature>
<feature type="active site" evidence="1">
    <location>
        <position position="122"/>
    </location>
</feature>
<feature type="active site" evidence="1">
    <location>
        <position position="280"/>
    </location>
</feature>
<feature type="active site" evidence="1">
    <location>
        <position position="311"/>
    </location>
</feature>
<organism>
    <name type="scientific">Streptomyces avermitilis (strain ATCC 31267 / DSM 46492 / JCM 5070 / NBRC 14893 / NCIMB 12804 / NRRL 8165 / MA-4680)</name>
    <dbReference type="NCBI Taxonomy" id="227882"/>
    <lineage>
        <taxon>Bacteria</taxon>
        <taxon>Bacillati</taxon>
        <taxon>Actinomycetota</taxon>
        <taxon>Actinomycetes</taxon>
        <taxon>Kitasatosporales</taxon>
        <taxon>Streptomycetaceae</taxon>
        <taxon>Streptomyces</taxon>
    </lineage>
</organism>
<protein>
    <recommendedName>
        <fullName evidence="1">Beta-ketoacyl-[acyl-carrier-protein] synthase III 1</fullName>
        <shortName evidence="1">Beta-ketoacyl-ACP synthase III 1</shortName>
        <shortName evidence="1">KAS III 1</shortName>
        <ecNumber evidence="1">2.3.1.180</ecNumber>
    </recommendedName>
    <alternativeName>
        <fullName evidence="1">3-oxoacyl-[acyl-carrier-protein] synthase 3 1</fullName>
    </alternativeName>
    <alternativeName>
        <fullName evidence="1">3-oxoacyl-[acyl-carrier-protein] synthase III 1</fullName>
    </alternativeName>
</protein>
<dbReference type="EC" id="2.3.1.180" evidence="1"/>
<dbReference type="EMBL" id="BA000030">
    <property type="protein sequence ID" value="BAC73499.1"/>
    <property type="molecule type" value="Genomic_DNA"/>
</dbReference>
<dbReference type="RefSeq" id="WP_010987189.1">
    <property type="nucleotide sequence ID" value="NZ_JZJK01000089.1"/>
</dbReference>
<dbReference type="SMR" id="Q82BB8"/>
<dbReference type="GeneID" id="41542868"/>
<dbReference type="KEGG" id="sma:SAVERM_5787"/>
<dbReference type="eggNOG" id="COG0332">
    <property type="taxonomic scope" value="Bacteria"/>
</dbReference>
<dbReference type="HOGENOM" id="CLU_039592_3_1_11"/>
<dbReference type="OrthoDB" id="9815506at2"/>
<dbReference type="UniPathway" id="UPA00094"/>
<dbReference type="Proteomes" id="UP000000428">
    <property type="component" value="Chromosome"/>
</dbReference>
<dbReference type="GO" id="GO:0005737">
    <property type="term" value="C:cytoplasm"/>
    <property type="evidence" value="ECO:0007669"/>
    <property type="project" value="UniProtKB-SubCell"/>
</dbReference>
<dbReference type="GO" id="GO:0004315">
    <property type="term" value="F:3-oxoacyl-[acyl-carrier-protein] synthase activity"/>
    <property type="evidence" value="ECO:0007669"/>
    <property type="project" value="InterPro"/>
</dbReference>
<dbReference type="GO" id="GO:0033818">
    <property type="term" value="F:beta-ketoacyl-acyl-carrier-protein synthase III activity"/>
    <property type="evidence" value="ECO:0007669"/>
    <property type="project" value="UniProtKB-UniRule"/>
</dbReference>
<dbReference type="GO" id="GO:0006633">
    <property type="term" value="P:fatty acid biosynthetic process"/>
    <property type="evidence" value="ECO:0007669"/>
    <property type="project" value="UniProtKB-UniRule"/>
</dbReference>
<dbReference type="CDD" id="cd00830">
    <property type="entry name" value="KAS_III"/>
    <property type="match status" value="1"/>
</dbReference>
<dbReference type="Gene3D" id="3.40.47.10">
    <property type="match status" value="2"/>
</dbReference>
<dbReference type="HAMAP" id="MF_01815">
    <property type="entry name" value="FabH"/>
    <property type="match status" value="1"/>
</dbReference>
<dbReference type="InterPro" id="IPR013747">
    <property type="entry name" value="ACP_syn_III_C"/>
</dbReference>
<dbReference type="InterPro" id="IPR013751">
    <property type="entry name" value="ACP_syn_III_N"/>
</dbReference>
<dbReference type="InterPro" id="IPR004655">
    <property type="entry name" value="FabH"/>
</dbReference>
<dbReference type="InterPro" id="IPR016039">
    <property type="entry name" value="Thiolase-like"/>
</dbReference>
<dbReference type="NCBIfam" id="NF006829">
    <property type="entry name" value="PRK09352.1"/>
    <property type="match status" value="1"/>
</dbReference>
<dbReference type="PANTHER" id="PTHR43091">
    <property type="entry name" value="3-OXOACYL-[ACYL-CARRIER-PROTEIN] SYNTHASE"/>
    <property type="match status" value="1"/>
</dbReference>
<dbReference type="PANTHER" id="PTHR43091:SF1">
    <property type="entry name" value="BETA-KETOACYL-[ACYL-CARRIER-PROTEIN] SYNTHASE III, CHLOROPLASTIC"/>
    <property type="match status" value="1"/>
</dbReference>
<dbReference type="Pfam" id="PF08545">
    <property type="entry name" value="ACP_syn_III"/>
    <property type="match status" value="1"/>
</dbReference>
<dbReference type="Pfam" id="PF08541">
    <property type="entry name" value="ACP_syn_III_C"/>
    <property type="match status" value="1"/>
</dbReference>
<dbReference type="SUPFAM" id="SSF53901">
    <property type="entry name" value="Thiolase-like"/>
    <property type="match status" value="1"/>
</dbReference>
<gene>
    <name evidence="1" type="primary">fabH1</name>
    <name type="ordered locus">SAV_5787</name>
</gene>